<accession>Q2NAJ5</accession>
<dbReference type="EMBL" id="CP000157">
    <property type="protein sequence ID" value="ABC63296.1"/>
    <property type="molecule type" value="Genomic_DNA"/>
</dbReference>
<dbReference type="RefSeq" id="WP_011414132.1">
    <property type="nucleotide sequence ID" value="NC_007722.1"/>
</dbReference>
<dbReference type="SMR" id="Q2NAJ5"/>
<dbReference type="STRING" id="314225.ELI_06020"/>
<dbReference type="KEGG" id="eli:ELI_06020"/>
<dbReference type="eggNOG" id="COG0576">
    <property type="taxonomic scope" value="Bacteria"/>
</dbReference>
<dbReference type="HOGENOM" id="CLU_057217_6_2_5"/>
<dbReference type="OrthoDB" id="9789811at2"/>
<dbReference type="Proteomes" id="UP000008808">
    <property type="component" value="Chromosome"/>
</dbReference>
<dbReference type="GO" id="GO:0005737">
    <property type="term" value="C:cytoplasm"/>
    <property type="evidence" value="ECO:0007669"/>
    <property type="project" value="UniProtKB-SubCell"/>
</dbReference>
<dbReference type="GO" id="GO:0000774">
    <property type="term" value="F:adenyl-nucleotide exchange factor activity"/>
    <property type="evidence" value="ECO:0007669"/>
    <property type="project" value="InterPro"/>
</dbReference>
<dbReference type="GO" id="GO:0042803">
    <property type="term" value="F:protein homodimerization activity"/>
    <property type="evidence" value="ECO:0007669"/>
    <property type="project" value="InterPro"/>
</dbReference>
<dbReference type="GO" id="GO:0051087">
    <property type="term" value="F:protein-folding chaperone binding"/>
    <property type="evidence" value="ECO:0007669"/>
    <property type="project" value="InterPro"/>
</dbReference>
<dbReference type="GO" id="GO:0051082">
    <property type="term" value="F:unfolded protein binding"/>
    <property type="evidence" value="ECO:0007669"/>
    <property type="project" value="TreeGrafter"/>
</dbReference>
<dbReference type="GO" id="GO:0006457">
    <property type="term" value="P:protein folding"/>
    <property type="evidence" value="ECO:0007669"/>
    <property type="project" value="InterPro"/>
</dbReference>
<dbReference type="CDD" id="cd00446">
    <property type="entry name" value="GrpE"/>
    <property type="match status" value="1"/>
</dbReference>
<dbReference type="FunFam" id="2.30.22.10:FF:000001">
    <property type="entry name" value="Protein GrpE"/>
    <property type="match status" value="1"/>
</dbReference>
<dbReference type="Gene3D" id="3.90.20.20">
    <property type="match status" value="1"/>
</dbReference>
<dbReference type="Gene3D" id="2.30.22.10">
    <property type="entry name" value="Head domain of nucleotide exchange factor GrpE"/>
    <property type="match status" value="1"/>
</dbReference>
<dbReference type="HAMAP" id="MF_01151">
    <property type="entry name" value="GrpE"/>
    <property type="match status" value="1"/>
</dbReference>
<dbReference type="InterPro" id="IPR000740">
    <property type="entry name" value="GrpE"/>
</dbReference>
<dbReference type="InterPro" id="IPR013805">
    <property type="entry name" value="GrpE_coiled_coil"/>
</dbReference>
<dbReference type="InterPro" id="IPR009012">
    <property type="entry name" value="GrpE_head"/>
</dbReference>
<dbReference type="NCBIfam" id="NF010738">
    <property type="entry name" value="PRK14140.1"/>
    <property type="match status" value="1"/>
</dbReference>
<dbReference type="PANTHER" id="PTHR21237">
    <property type="entry name" value="GRPE PROTEIN"/>
    <property type="match status" value="1"/>
</dbReference>
<dbReference type="PANTHER" id="PTHR21237:SF23">
    <property type="entry name" value="GRPE PROTEIN HOMOLOG, MITOCHONDRIAL"/>
    <property type="match status" value="1"/>
</dbReference>
<dbReference type="Pfam" id="PF01025">
    <property type="entry name" value="GrpE"/>
    <property type="match status" value="1"/>
</dbReference>
<dbReference type="PRINTS" id="PR00773">
    <property type="entry name" value="GRPEPROTEIN"/>
</dbReference>
<dbReference type="SUPFAM" id="SSF58014">
    <property type="entry name" value="Coiled-coil domain of nucleotide exchange factor GrpE"/>
    <property type="match status" value="1"/>
</dbReference>
<dbReference type="SUPFAM" id="SSF51064">
    <property type="entry name" value="Head domain of nucleotide exchange factor GrpE"/>
    <property type="match status" value="1"/>
</dbReference>
<dbReference type="PROSITE" id="PS01071">
    <property type="entry name" value="GRPE"/>
    <property type="match status" value="1"/>
</dbReference>
<proteinExistence type="inferred from homology"/>
<keyword id="KW-0143">Chaperone</keyword>
<keyword id="KW-0963">Cytoplasm</keyword>
<keyword id="KW-1185">Reference proteome</keyword>
<keyword id="KW-0346">Stress response</keyword>
<organism>
    <name type="scientific">Erythrobacter litoralis (strain HTCC2594)</name>
    <dbReference type="NCBI Taxonomy" id="314225"/>
    <lineage>
        <taxon>Bacteria</taxon>
        <taxon>Pseudomonadati</taxon>
        <taxon>Pseudomonadota</taxon>
        <taxon>Alphaproteobacteria</taxon>
        <taxon>Sphingomonadales</taxon>
        <taxon>Erythrobacteraceae</taxon>
        <taxon>Erythrobacter/Porphyrobacter group</taxon>
        <taxon>Erythrobacter</taxon>
    </lineage>
</organism>
<name>GRPE_ERYLH</name>
<gene>
    <name evidence="1" type="primary">grpE</name>
    <name type="ordered locus">ELI_06020</name>
</gene>
<evidence type="ECO:0000255" key="1">
    <source>
        <dbReference type="HAMAP-Rule" id="MF_01151"/>
    </source>
</evidence>
<evidence type="ECO:0000256" key="2">
    <source>
        <dbReference type="SAM" id="MobiDB-lite"/>
    </source>
</evidence>
<sequence>MSDDTKKQDTAADAEVEKEMEGVPEHLRDDRGSEEDASDDLSAALESLKSDLEAAKQETLYAKAETQNVRRRMEKDIQDARTYAATGFARDILSIADNLARAIDAIPQELREDEKFKGLVAGIEATQRELDKVFAQHGVSRIAAMGLPLDPNQHQAMMEVPTDEVEPGTIVQEMQAGYMIRDRLLRPSMVGVAKKPD</sequence>
<feature type="chain" id="PRO_1000164193" description="Protein GrpE">
    <location>
        <begin position="1"/>
        <end position="197"/>
    </location>
</feature>
<feature type="region of interest" description="Disordered" evidence="2">
    <location>
        <begin position="1"/>
        <end position="48"/>
    </location>
</feature>
<feature type="compositionally biased region" description="Basic and acidic residues" evidence="2">
    <location>
        <begin position="1"/>
        <end position="31"/>
    </location>
</feature>
<reference key="1">
    <citation type="journal article" date="2009" name="J. Bacteriol.">
        <title>Complete genome sequence of Erythrobacter litoralis HTCC2594.</title>
        <authorList>
            <person name="Oh H.M."/>
            <person name="Giovannoni S.J."/>
            <person name="Ferriera S."/>
            <person name="Johnson J."/>
            <person name="Cho J.C."/>
        </authorList>
    </citation>
    <scope>NUCLEOTIDE SEQUENCE [LARGE SCALE GENOMIC DNA]</scope>
    <source>
        <strain>HTCC2594</strain>
    </source>
</reference>
<comment type="function">
    <text evidence="1">Participates actively in the response to hyperosmotic and heat shock by preventing the aggregation of stress-denatured proteins, in association with DnaK and GrpE. It is the nucleotide exchange factor for DnaK and may function as a thermosensor. Unfolded proteins bind initially to DnaJ; upon interaction with the DnaJ-bound protein, DnaK hydrolyzes its bound ATP, resulting in the formation of a stable complex. GrpE releases ADP from DnaK; ATP binding to DnaK triggers the release of the substrate protein, thus completing the reaction cycle. Several rounds of ATP-dependent interactions between DnaJ, DnaK and GrpE are required for fully efficient folding.</text>
</comment>
<comment type="subunit">
    <text evidence="1">Homodimer.</text>
</comment>
<comment type="subcellular location">
    <subcellularLocation>
        <location evidence="1">Cytoplasm</location>
    </subcellularLocation>
</comment>
<comment type="similarity">
    <text evidence="1">Belongs to the GrpE family.</text>
</comment>
<protein>
    <recommendedName>
        <fullName evidence="1">Protein GrpE</fullName>
    </recommendedName>
    <alternativeName>
        <fullName evidence="1">HSP-70 cofactor</fullName>
    </alternativeName>
</protein>